<evidence type="ECO:0000255" key="1">
    <source>
        <dbReference type="HAMAP-Rule" id="MF_01039"/>
    </source>
</evidence>
<evidence type="ECO:0000256" key="2">
    <source>
        <dbReference type="SAM" id="MobiDB-lite"/>
    </source>
</evidence>
<reference key="1">
    <citation type="journal article" date="2008" name="Genome Res.">
        <title>Genome sequence of the beta-rhizobium Cupriavidus taiwanensis and comparative genomics of rhizobia.</title>
        <authorList>
            <person name="Amadou C."/>
            <person name="Pascal G."/>
            <person name="Mangenot S."/>
            <person name="Glew M."/>
            <person name="Bontemps C."/>
            <person name="Capela D."/>
            <person name="Carrere S."/>
            <person name="Cruveiller S."/>
            <person name="Dossat C."/>
            <person name="Lajus A."/>
            <person name="Marchetti M."/>
            <person name="Poinsot V."/>
            <person name="Rouy Z."/>
            <person name="Servin B."/>
            <person name="Saad M."/>
            <person name="Schenowitz C."/>
            <person name="Barbe V."/>
            <person name="Batut J."/>
            <person name="Medigue C."/>
            <person name="Masson-Boivin C."/>
        </authorList>
    </citation>
    <scope>NUCLEOTIDE SEQUENCE [LARGE SCALE GENOMIC DNA]</scope>
    <source>
        <strain>DSM 17343 / BCRC 17206 / CCUG 44338 / CIP 107171 / LMG 19424 / R1</strain>
    </source>
</reference>
<comment type="function">
    <text evidence="1">Catalyzes the interconversion of 2-phosphoglycerate and 3-phosphoglycerate.</text>
</comment>
<comment type="catalytic activity">
    <reaction evidence="1">
        <text>(2R)-2-phosphoglycerate = (2R)-3-phosphoglycerate</text>
        <dbReference type="Rhea" id="RHEA:15901"/>
        <dbReference type="ChEBI" id="CHEBI:58272"/>
        <dbReference type="ChEBI" id="CHEBI:58289"/>
        <dbReference type="EC" id="5.4.2.11"/>
    </reaction>
</comment>
<comment type="pathway">
    <text evidence="1">Carbohydrate degradation; glycolysis; pyruvate from D-glyceraldehyde 3-phosphate: step 3/5.</text>
</comment>
<comment type="subunit">
    <text evidence="1">Homodimer.</text>
</comment>
<comment type="similarity">
    <text evidence="1">Belongs to the phosphoglycerate mutase family. BPG-dependent PGAM subfamily.</text>
</comment>
<accession>B2AGP7</accession>
<gene>
    <name evidence="1" type="primary">gpmA</name>
    <name type="ordered locus">RALTA_A0276</name>
</gene>
<sequence length="248" mass="27883">MYKLVLIRHGESTWNLENRFTGWVDVDLTETGAAQARQAGKLLKEAGMGFDVAYTSVLKRAIRTLWHVQDEMDLMWIPVRNEWRLNERHYGALAGLNKSETAAKFGDEQVLVWRRSYDTPPPALEPTDPRASYDDPRYANVPRNEIPLTECLKDTVARVMPLWNESIAPDIQSGKRVVIAAHGNSIRALVKYLDQISDDDIVGLNIPNGTPLVYELDADLRPLRHYYLGDQEAIAASLAAVASQGKAR</sequence>
<keyword id="KW-0312">Gluconeogenesis</keyword>
<keyword id="KW-0324">Glycolysis</keyword>
<keyword id="KW-0413">Isomerase</keyword>
<protein>
    <recommendedName>
        <fullName evidence="1">2,3-bisphosphoglycerate-dependent phosphoglycerate mutase</fullName>
        <shortName evidence="1">BPG-dependent PGAM</shortName>
        <shortName evidence="1">PGAM</shortName>
        <shortName evidence="1">Phosphoglyceromutase</shortName>
        <shortName evidence="1">dPGM</shortName>
        <ecNumber evidence="1">5.4.2.11</ecNumber>
    </recommendedName>
</protein>
<proteinExistence type="inferred from homology"/>
<feature type="chain" id="PRO_1000135939" description="2,3-bisphosphoglycerate-dependent phosphoglycerate mutase">
    <location>
        <begin position="1"/>
        <end position="248"/>
    </location>
</feature>
<feature type="region of interest" description="Disordered" evidence="2">
    <location>
        <begin position="117"/>
        <end position="137"/>
    </location>
</feature>
<feature type="compositionally biased region" description="Basic and acidic residues" evidence="2">
    <location>
        <begin position="127"/>
        <end position="137"/>
    </location>
</feature>
<feature type="active site" description="Tele-phosphohistidine intermediate" evidence="1">
    <location>
        <position position="9"/>
    </location>
</feature>
<feature type="active site" description="Proton donor/acceptor" evidence="1">
    <location>
        <position position="87"/>
    </location>
</feature>
<feature type="binding site" evidence="1">
    <location>
        <begin position="8"/>
        <end position="15"/>
    </location>
    <ligand>
        <name>substrate</name>
    </ligand>
</feature>
<feature type="binding site" evidence="1">
    <location>
        <begin position="21"/>
        <end position="22"/>
    </location>
    <ligand>
        <name>substrate</name>
    </ligand>
</feature>
<feature type="binding site" evidence="1">
    <location>
        <position position="60"/>
    </location>
    <ligand>
        <name>substrate</name>
    </ligand>
</feature>
<feature type="binding site" evidence="1">
    <location>
        <begin position="87"/>
        <end position="90"/>
    </location>
    <ligand>
        <name>substrate</name>
    </ligand>
</feature>
<feature type="binding site" evidence="1">
    <location>
        <position position="98"/>
    </location>
    <ligand>
        <name>substrate</name>
    </ligand>
</feature>
<feature type="binding site" evidence="1">
    <location>
        <begin position="114"/>
        <end position="115"/>
    </location>
    <ligand>
        <name>substrate</name>
    </ligand>
</feature>
<feature type="binding site" evidence="1">
    <location>
        <begin position="183"/>
        <end position="184"/>
    </location>
    <ligand>
        <name>substrate</name>
    </ligand>
</feature>
<feature type="site" description="Transition state stabilizer" evidence="1">
    <location>
        <position position="182"/>
    </location>
</feature>
<name>GPMA_CUPTR</name>
<dbReference type="EC" id="5.4.2.11" evidence="1"/>
<dbReference type="EMBL" id="CU633749">
    <property type="protein sequence ID" value="CAP62946.1"/>
    <property type="molecule type" value="Genomic_DNA"/>
</dbReference>
<dbReference type="RefSeq" id="WP_012351613.1">
    <property type="nucleotide sequence ID" value="NC_010528.1"/>
</dbReference>
<dbReference type="SMR" id="B2AGP7"/>
<dbReference type="GeneID" id="29761707"/>
<dbReference type="KEGG" id="cti:RALTA_A0276"/>
<dbReference type="eggNOG" id="COG0588">
    <property type="taxonomic scope" value="Bacteria"/>
</dbReference>
<dbReference type="HOGENOM" id="CLU_033323_1_1_4"/>
<dbReference type="BioCyc" id="CTAI977880:RALTA_RS01350-MONOMER"/>
<dbReference type="UniPathway" id="UPA00109">
    <property type="reaction ID" value="UER00186"/>
</dbReference>
<dbReference type="Proteomes" id="UP000001692">
    <property type="component" value="Chromosome 1"/>
</dbReference>
<dbReference type="GO" id="GO:0004619">
    <property type="term" value="F:phosphoglycerate mutase activity"/>
    <property type="evidence" value="ECO:0007669"/>
    <property type="project" value="UniProtKB-EC"/>
</dbReference>
<dbReference type="GO" id="GO:0006094">
    <property type="term" value="P:gluconeogenesis"/>
    <property type="evidence" value="ECO:0007669"/>
    <property type="project" value="UniProtKB-UniRule"/>
</dbReference>
<dbReference type="GO" id="GO:0006096">
    <property type="term" value="P:glycolytic process"/>
    <property type="evidence" value="ECO:0007669"/>
    <property type="project" value="UniProtKB-UniRule"/>
</dbReference>
<dbReference type="CDD" id="cd07067">
    <property type="entry name" value="HP_PGM_like"/>
    <property type="match status" value="1"/>
</dbReference>
<dbReference type="FunFam" id="3.40.50.1240:FF:000003">
    <property type="entry name" value="2,3-bisphosphoglycerate-dependent phosphoglycerate mutase"/>
    <property type="match status" value="1"/>
</dbReference>
<dbReference type="Gene3D" id="3.40.50.1240">
    <property type="entry name" value="Phosphoglycerate mutase-like"/>
    <property type="match status" value="1"/>
</dbReference>
<dbReference type="HAMAP" id="MF_01039">
    <property type="entry name" value="PGAM_GpmA"/>
    <property type="match status" value="1"/>
</dbReference>
<dbReference type="InterPro" id="IPR013078">
    <property type="entry name" value="His_Pase_superF_clade-1"/>
</dbReference>
<dbReference type="InterPro" id="IPR029033">
    <property type="entry name" value="His_PPase_superfam"/>
</dbReference>
<dbReference type="InterPro" id="IPR001345">
    <property type="entry name" value="PG/BPGM_mutase_AS"/>
</dbReference>
<dbReference type="InterPro" id="IPR005952">
    <property type="entry name" value="Phosphogly_mut1"/>
</dbReference>
<dbReference type="NCBIfam" id="TIGR01258">
    <property type="entry name" value="pgm_1"/>
    <property type="match status" value="1"/>
</dbReference>
<dbReference type="NCBIfam" id="NF010713">
    <property type="entry name" value="PRK14115.1"/>
    <property type="match status" value="1"/>
</dbReference>
<dbReference type="PANTHER" id="PTHR11931">
    <property type="entry name" value="PHOSPHOGLYCERATE MUTASE"/>
    <property type="match status" value="1"/>
</dbReference>
<dbReference type="Pfam" id="PF00300">
    <property type="entry name" value="His_Phos_1"/>
    <property type="match status" value="2"/>
</dbReference>
<dbReference type="PIRSF" id="PIRSF000709">
    <property type="entry name" value="6PFK_2-Ptase"/>
    <property type="match status" value="1"/>
</dbReference>
<dbReference type="SMART" id="SM00855">
    <property type="entry name" value="PGAM"/>
    <property type="match status" value="1"/>
</dbReference>
<dbReference type="SUPFAM" id="SSF53254">
    <property type="entry name" value="Phosphoglycerate mutase-like"/>
    <property type="match status" value="1"/>
</dbReference>
<dbReference type="PROSITE" id="PS00175">
    <property type="entry name" value="PG_MUTASE"/>
    <property type="match status" value="1"/>
</dbReference>
<organism>
    <name type="scientific">Cupriavidus taiwanensis (strain DSM 17343 / BCRC 17206 / CCUG 44338 / CIP 107171 / LMG 19424 / R1)</name>
    <name type="common">Ralstonia taiwanensis (strain LMG 19424)</name>
    <dbReference type="NCBI Taxonomy" id="977880"/>
    <lineage>
        <taxon>Bacteria</taxon>
        <taxon>Pseudomonadati</taxon>
        <taxon>Pseudomonadota</taxon>
        <taxon>Betaproteobacteria</taxon>
        <taxon>Burkholderiales</taxon>
        <taxon>Burkholderiaceae</taxon>
        <taxon>Cupriavidus</taxon>
    </lineage>
</organism>